<comment type="function">
    <text evidence="1">Bifunctional enzyme which can phosphorylate or dephosphorylate isocitrate dehydrogenase (IDH) on a specific serine residue. This is a regulatory mechanism which enables bacteria to bypass the Krebs cycle via the glyoxylate shunt in response to the source of carbon. When bacteria are grown on glucose, IDH is fully active and unphosphorylated, but when grown on acetate or ethanol, the activity of IDH declines drastically concomitant with its phosphorylation.</text>
</comment>
<comment type="catalytic activity">
    <reaction evidence="1">
        <text>L-seryl-[isocitrate dehydrogenase] + ATP = O-phospho-L-seryl-[isocitrate dehydrogenase] + ADP + H(+)</text>
        <dbReference type="Rhea" id="RHEA:43540"/>
        <dbReference type="Rhea" id="RHEA-COMP:10605"/>
        <dbReference type="Rhea" id="RHEA-COMP:10606"/>
        <dbReference type="ChEBI" id="CHEBI:15378"/>
        <dbReference type="ChEBI" id="CHEBI:29999"/>
        <dbReference type="ChEBI" id="CHEBI:30616"/>
        <dbReference type="ChEBI" id="CHEBI:83421"/>
        <dbReference type="ChEBI" id="CHEBI:456216"/>
        <dbReference type="EC" id="2.7.11.5"/>
    </reaction>
</comment>
<comment type="subcellular location">
    <subcellularLocation>
        <location evidence="1">Cytoplasm</location>
    </subcellularLocation>
</comment>
<comment type="similarity">
    <text evidence="1">Belongs to the AceK family.</text>
</comment>
<keyword id="KW-0067">ATP-binding</keyword>
<keyword id="KW-0963">Cytoplasm</keyword>
<keyword id="KW-0329">Glyoxylate bypass</keyword>
<keyword id="KW-0378">Hydrolase</keyword>
<keyword id="KW-0418">Kinase</keyword>
<keyword id="KW-0547">Nucleotide-binding</keyword>
<keyword id="KW-0904">Protein phosphatase</keyword>
<keyword id="KW-0723">Serine/threonine-protein kinase</keyword>
<keyword id="KW-0808">Transferase</keyword>
<keyword id="KW-0816">Tricarboxylic acid cycle</keyword>
<name>ACEK_YERPP</name>
<evidence type="ECO:0000255" key="1">
    <source>
        <dbReference type="HAMAP-Rule" id="MF_00747"/>
    </source>
</evidence>
<dbReference type="EC" id="2.7.11.5" evidence="1"/>
<dbReference type="EC" id="3.1.3.-" evidence="1"/>
<dbReference type="EMBL" id="CP000668">
    <property type="protein sequence ID" value="ABP38597.1"/>
    <property type="molecule type" value="Genomic_DNA"/>
</dbReference>
<dbReference type="RefSeq" id="WP_002212079.1">
    <property type="nucleotide sequence ID" value="NZ_CP009715.1"/>
</dbReference>
<dbReference type="SMR" id="A4TH34"/>
<dbReference type="GeneID" id="57974998"/>
<dbReference type="KEGG" id="ypp:YPDSF_0175"/>
<dbReference type="PATRIC" id="fig|386656.14.peg.1463"/>
<dbReference type="GO" id="GO:0005737">
    <property type="term" value="C:cytoplasm"/>
    <property type="evidence" value="ECO:0007669"/>
    <property type="project" value="UniProtKB-SubCell"/>
</dbReference>
<dbReference type="GO" id="GO:0008772">
    <property type="term" value="F:[isocitrate dehydrogenase (NADP+)] kinase activity"/>
    <property type="evidence" value="ECO:0007669"/>
    <property type="project" value="UniProtKB-UniRule"/>
</dbReference>
<dbReference type="GO" id="GO:0016208">
    <property type="term" value="F:AMP binding"/>
    <property type="evidence" value="ECO:0007669"/>
    <property type="project" value="TreeGrafter"/>
</dbReference>
<dbReference type="GO" id="GO:0005524">
    <property type="term" value="F:ATP binding"/>
    <property type="evidence" value="ECO:0007669"/>
    <property type="project" value="UniProtKB-UniRule"/>
</dbReference>
<dbReference type="GO" id="GO:0004721">
    <property type="term" value="F:phosphoprotein phosphatase activity"/>
    <property type="evidence" value="ECO:0007669"/>
    <property type="project" value="UniProtKB-KW"/>
</dbReference>
<dbReference type="GO" id="GO:0004674">
    <property type="term" value="F:protein serine/threonine kinase activity"/>
    <property type="evidence" value="ECO:0007669"/>
    <property type="project" value="UniProtKB-KW"/>
</dbReference>
<dbReference type="GO" id="GO:0006006">
    <property type="term" value="P:glucose metabolic process"/>
    <property type="evidence" value="ECO:0007669"/>
    <property type="project" value="InterPro"/>
</dbReference>
<dbReference type="GO" id="GO:0006097">
    <property type="term" value="P:glyoxylate cycle"/>
    <property type="evidence" value="ECO:0007669"/>
    <property type="project" value="UniProtKB-UniRule"/>
</dbReference>
<dbReference type="GO" id="GO:0006099">
    <property type="term" value="P:tricarboxylic acid cycle"/>
    <property type="evidence" value="ECO:0007669"/>
    <property type="project" value="UniProtKB-UniRule"/>
</dbReference>
<dbReference type="HAMAP" id="MF_00747">
    <property type="entry name" value="AceK"/>
    <property type="match status" value="1"/>
</dbReference>
<dbReference type="InterPro" id="IPR046855">
    <property type="entry name" value="AceK_kinase"/>
</dbReference>
<dbReference type="InterPro" id="IPR046854">
    <property type="entry name" value="AceK_regulatory"/>
</dbReference>
<dbReference type="InterPro" id="IPR010452">
    <property type="entry name" value="Isocitrate_DH_AceK"/>
</dbReference>
<dbReference type="NCBIfam" id="NF002804">
    <property type="entry name" value="PRK02946.1"/>
    <property type="match status" value="1"/>
</dbReference>
<dbReference type="PANTHER" id="PTHR39559">
    <property type="match status" value="1"/>
</dbReference>
<dbReference type="PANTHER" id="PTHR39559:SF1">
    <property type="entry name" value="ISOCITRATE DEHYDROGENASE KINASE_PHOSPHATASE"/>
    <property type="match status" value="1"/>
</dbReference>
<dbReference type="Pfam" id="PF06315">
    <property type="entry name" value="AceK_kinase"/>
    <property type="match status" value="1"/>
</dbReference>
<dbReference type="Pfam" id="PF20423">
    <property type="entry name" value="AceK_regulatory"/>
    <property type="match status" value="1"/>
</dbReference>
<dbReference type="PIRSF" id="PIRSF000719">
    <property type="entry name" value="AceK"/>
    <property type="match status" value="1"/>
</dbReference>
<organism>
    <name type="scientific">Yersinia pestis (strain Pestoides F)</name>
    <dbReference type="NCBI Taxonomy" id="386656"/>
    <lineage>
        <taxon>Bacteria</taxon>
        <taxon>Pseudomonadati</taxon>
        <taxon>Pseudomonadota</taxon>
        <taxon>Gammaproteobacteria</taxon>
        <taxon>Enterobacterales</taxon>
        <taxon>Yersiniaceae</taxon>
        <taxon>Yersinia</taxon>
    </lineage>
</organism>
<feature type="chain" id="PRO_1000046554" description="Isocitrate dehydrogenase kinase/phosphatase">
    <location>
        <begin position="1"/>
        <end position="575"/>
    </location>
</feature>
<feature type="active site" evidence="1">
    <location>
        <position position="371"/>
    </location>
</feature>
<feature type="binding site" evidence="1">
    <location>
        <begin position="315"/>
        <end position="321"/>
    </location>
    <ligand>
        <name>ATP</name>
        <dbReference type="ChEBI" id="CHEBI:30616"/>
    </ligand>
</feature>
<feature type="binding site" evidence="1">
    <location>
        <position position="336"/>
    </location>
    <ligand>
        <name>ATP</name>
        <dbReference type="ChEBI" id="CHEBI:30616"/>
    </ligand>
</feature>
<proteinExistence type="inferred from homology"/>
<protein>
    <recommendedName>
        <fullName evidence="1">Isocitrate dehydrogenase kinase/phosphatase</fullName>
        <shortName evidence="1">IDH kinase/phosphatase</shortName>
        <shortName evidence="1">IDHK/P</shortName>
        <ecNumber evidence="1">2.7.11.5</ecNumber>
        <ecNumber evidence="1">3.1.3.-</ecNumber>
    </recommendedName>
</protein>
<reference key="1">
    <citation type="submission" date="2007-02" db="EMBL/GenBank/DDBJ databases">
        <title>Complete sequence of chromosome of Yersinia pestis Pestoides F.</title>
        <authorList>
            <consortium name="US DOE Joint Genome Institute"/>
            <person name="Copeland A."/>
            <person name="Lucas S."/>
            <person name="Lapidus A."/>
            <person name="Barry K."/>
            <person name="Detter J.C."/>
            <person name="Glavina del Rio T."/>
            <person name="Hammon N."/>
            <person name="Israni S."/>
            <person name="Dalin E."/>
            <person name="Tice H."/>
            <person name="Pitluck S."/>
            <person name="Di Bartolo G."/>
            <person name="Chain P."/>
            <person name="Malfatti S."/>
            <person name="Shin M."/>
            <person name="Vergez L."/>
            <person name="Schmutz J."/>
            <person name="Larimer F."/>
            <person name="Land M."/>
            <person name="Hauser L."/>
            <person name="Worsham P."/>
            <person name="Chu M."/>
            <person name="Bearden S."/>
            <person name="Garcia E."/>
            <person name="Richardson P."/>
        </authorList>
    </citation>
    <scope>NUCLEOTIDE SEQUENCE [LARGE SCALE GENOMIC DNA]</scope>
    <source>
        <strain>Pestoides F</strain>
    </source>
</reference>
<accession>A4TH34</accession>
<gene>
    <name evidence="1" type="primary">aceK</name>
    <name type="ordered locus">YPDSF_0175</name>
</gene>
<sequence length="575" mass="67622">MVAKLEQLIAQTILQGFDAQYGRFLEVTAGAQHRFEQADWHAVQQAMKKRIHLYDHHVGLVVEQLKYITDQRHFDVEFLARVKEIYTGLLPDYPRFEIAESFFNSVYCRLFKHRDLTPDKLFVFSSQPERRFREIPRPLARDFIPKGDLSGMLQMVLNDLSLRLHWENLSRDIDYIVMAIRQAFTDEQLASAHFQIANELFYRNKAAWLVGKLRLNGDIYPFLLPIHHNESGELFIDTCLTSKAEASIVFGFARSYFMVYVPLPAAMVEWLREILPGKSTAELYTAIGCQKHGKTESYREYLAFIHQSSEQFIIAPGVKGMVMLVFTLPSFDRVFKVIKDQFAPQKEVTQARVLECYQLVKEHDRVGRMADTQEYENFVIDKHRISPELLAELQHEVPEKLEDLGDKIVIKHLYMERRMTPLNLYMEQADDQQLKDAIEEYGNAIKQLAAANIFPGDMLFKNFGVTRHGRVVFYDYDEICYMTEVNFRDIPPPRYPEDEMASEPWYSVSPNDVFPEEFRHFLCSDRKVRHFFEEMHGDLFQASYWRGLQQRIRDGHVEDVFAYRRKQRFSQRALN</sequence>